<organism>
    <name type="scientific">Thiobacillus denitrificans (strain ATCC 25259 / T1)</name>
    <dbReference type="NCBI Taxonomy" id="292415"/>
    <lineage>
        <taxon>Bacteria</taxon>
        <taxon>Pseudomonadati</taxon>
        <taxon>Pseudomonadota</taxon>
        <taxon>Betaproteobacteria</taxon>
        <taxon>Nitrosomonadales</taxon>
        <taxon>Thiobacillaceae</taxon>
        <taxon>Thiobacillus</taxon>
    </lineage>
</organism>
<sequence length="248" mass="27168">MSIVNISCYKFVTLNDREALKADLGARCLQLGLRGTILLAPEGINVFLAGTRAAIDAIVAGLRADPRFADLEPKLSLSAEAPFTRMRVRLKKEIITMKMPVVRPEEGRAPAVAAATLKRWLDQGCDDEGRPVVMLDTRNDYEVAAGSFENAVDYGIGVFSEFPPQLQRRRDDYAGKTVVSFCTGGIRCEKAAIHMQEIGVERVYQLEGGILKYFEEVGGAHYRGGCFVFDAREAVGADLQPLGGRVHC</sequence>
<evidence type="ECO:0000255" key="1">
    <source>
        <dbReference type="HAMAP-Rule" id="MF_00469"/>
    </source>
</evidence>
<accession>Q3SKY5</accession>
<proteinExistence type="inferred from homology"/>
<feature type="chain" id="PRO_0000242954" description="tRNA uridine(34) hydroxylase">
    <location>
        <begin position="1"/>
        <end position="248"/>
    </location>
</feature>
<feature type="domain" description="Rhodanese" evidence="1">
    <location>
        <begin position="128"/>
        <end position="222"/>
    </location>
</feature>
<feature type="active site" description="Cysteine persulfide intermediate" evidence="1">
    <location>
        <position position="182"/>
    </location>
</feature>
<comment type="function">
    <text evidence="1">Catalyzes oxygen-dependent 5-hydroxyuridine (ho5U) modification at position 34 in tRNAs.</text>
</comment>
<comment type="catalytic activity">
    <reaction evidence="1">
        <text>uridine(34) in tRNA + AH2 + O2 = 5-hydroxyuridine(34) in tRNA + A + H2O</text>
        <dbReference type="Rhea" id="RHEA:64224"/>
        <dbReference type="Rhea" id="RHEA-COMP:11727"/>
        <dbReference type="Rhea" id="RHEA-COMP:13381"/>
        <dbReference type="ChEBI" id="CHEBI:13193"/>
        <dbReference type="ChEBI" id="CHEBI:15377"/>
        <dbReference type="ChEBI" id="CHEBI:15379"/>
        <dbReference type="ChEBI" id="CHEBI:17499"/>
        <dbReference type="ChEBI" id="CHEBI:65315"/>
        <dbReference type="ChEBI" id="CHEBI:136877"/>
    </reaction>
</comment>
<comment type="similarity">
    <text evidence="1">Belongs to the TrhO family.</text>
</comment>
<protein>
    <recommendedName>
        <fullName evidence="1">tRNA uridine(34) hydroxylase</fullName>
        <ecNumber evidence="1">1.14.-.-</ecNumber>
    </recommendedName>
    <alternativeName>
        <fullName evidence="1">tRNA hydroxylation protein O</fullName>
    </alternativeName>
</protein>
<dbReference type="EC" id="1.14.-.-" evidence="1"/>
<dbReference type="EMBL" id="CP000116">
    <property type="protein sequence ID" value="AAZ96636.1"/>
    <property type="molecule type" value="Genomic_DNA"/>
</dbReference>
<dbReference type="RefSeq" id="WP_011311195.1">
    <property type="nucleotide sequence ID" value="NC_007404.1"/>
</dbReference>
<dbReference type="SMR" id="Q3SKY5"/>
<dbReference type="STRING" id="292415.Tbd_0683"/>
<dbReference type="KEGG" id="tbd:Tbd_0683"/>
<dbReference type="eggNOG" id="COG1054">
    <property type="taxonomic scope" value="Bacteria"/>
</dbReference>
<dbReference type="HOGENOM" id="CLU_038878_0_1_4"/>
<dbReference type="OrthoDB" id="9778326at2"/>
<dbReference type="Proteomes" id="UP000008291">
    <property type="component" value="Chromosome"/>
</dbReference>
<dbReference type="GO" id="GO:0016705">
    <property type="term" value="F:oxidoreductase activity, acting on paired donors, with incorporation or reduction of molecular oxygen"/>
    <property type="evidence" value="ECO:0007669"/>
    <property type="project" value="UniProtKB-UniRule"/>
</dbReference>
<dbReference type="GO" id="GO:0006400">
    <property type="term" value="P:tRNA modification"/>
    <property type="evidence" value="ECO:0007669"/>
    <property type="project" value="UniProtKB-UniRule"/>
</dbReference>
<dbReference type="Gene3D" id="3.30.70.100">
    <property type="match status" value="1"/>
</dbReference>
<dbReference type="Gene3D" id="3.40.250.10">
    <property type="entry name" value="Rhodanese-like domain"/>
    <property type="match status" value="1"/>
</dbReference>
<dbReference type="HAMAP" id="MF_00469">
    <property type="entry name" value="TrhO"/>
    <property type="match status" value="1"/>
</dbReference>
<dbReference type="InterPro" id="IPR001763">
    <property type="entry name" value="Rhodanese-like_dom"/>
</dbReference>
<dbReference type="InterPro" id="IPR036873">
    <property type="entry name" value="Rhodanese-like_dom_sf"/>
</dbReference>
<dbReference type="InterPro" id="IPR020936">
    <property type="entry name" value="TrhO"/>
</dbReference>
<dbReference type="InterPro" id="IPR040503">
    <property type="entry name" value="TRHO_N"/>
</dbReference>
<dbReference type="NCBIfam" id="NF003703">
    <property type="entry name" value="PRK05320.1"/>
    <property type="match status" value="1"/>
</dbReference>
<dbReference type="PANTHER" id="PTHR43268:SF3">
    <property type="entry name" value="RHODANESE-LIKE DOMAIN-CONTAINING PROTEIN 7-RELATED"/>
    <property type="match status" value="1"/>
</dbReference>
<dbReference type="PANTHER" id="PTHR43268">
    <property type="entry name" value="THIOSULFATE SULFURTRANSFERASE/RHODANESE-LIKE DOMAIN-CONTAINING PROTEIN 2"/>
    <property type="match status" value="1"/>
</dbReference>
<dbReference type="Pfam" id="PF00581">
    <property type="entry name" value="Rhodanese"/>
    <property type="match status" value="1"/>
</dbReference>
<dbReference type="Pfam" id="PF17773">
    <property type="entry name" value="UPF0176_N"/>
    <property type="match status" value="1"/>
</dbReference>
<dbReference type="SMART" id="SM00450">
    <property type="entry name" value="RHOD"/>
    <property type="match status" value="1"/>
</dbReference>
<dbReference type="SUPFAM" id="SSF52821">
    <property type="entry name" value="Rhodanese/Cell cycle control phosphatase"/>
    <property type="match status" value="1"/>
</dbReference>
<dbReference type="PROSITE" id="PS50206">
    <property type="entry name" value="RHODANESE_3"/>
    <property type="match status" value="1"/>
</dbReference>
<keyword id="KW-0560">Oxidoreductase</keyword>
<keyword id="KW-1185">Reference proteome</keyword>
<keyword id="KW-0819">tRNA processing</keyword>
<gene>
    <name evidence="1" type="primary">trhO</name>
    <name type="ordered locus">Tbd_0683</name>
</gene>
<reference key="1">
    <citation type="journal article" date="2006" name="J. Bacteriol.">
        <title>The genome sequence of the obligately chemolithoautotrophic, facultatively anaerobic bacterium Thiobacillus denitrificans.</title>
        <authorList>
            <person name="Beller H.R."/>
            <person name="Chain P.S."/>
            <person name="Letain T.E."/>
            <person name="Chakicherla A."/>
            <person name="Larimer F.W."/>
            <person name="Richardson P.M."/>
            <person name="Coleman M.A."/>
            <person name="Wood A.P."/>
            <person name="Kelly D.P."/>
        </authorList>
    </citation>
    <scope>NUCLEOTIDE SEQUENCE [LARGE SCALE GENOMIC DNA]</scope>
    <source>
        <strain>ATCC 25259 / T1</strain>
    </source>
</reference>
<name>TRHO_THIDA</name>